<feature type="chain" id="PRO_0000349204" description="Rap guanine nucleotide exchange factor-like 1">
    <location>
        <begin position="1"/>
        <end position="456"/>
    </location>
</feature>
<feature type="domain" description="Ras-GEF" evidence="1">
    <location>
        <begin position="218"/>
        <end position="454"/>
    </location>
</feature>
<dbReference type="EMBL" id="CR859477">
    <property type="protein sequence ID" value="CAH91648.1"/>
    <property type="molecule type" value="mRNA"/>
</dbReference>
<dbReference type="BMRB" id="Q5R9B2"/>
<dbReference type="SMR" id="Q5R9B2"/>
<dbReference type="KEGG" id="pon:100172904"/>
<dbReference type="GO" id="GO:0005886">
    <property type="term" value="C:plasma membrane"/>
    <property type="evidence" value="ECO:0007669"/>
    <property type="project" value="TreeGrafter"/>
</dbReference>
<dbReference type="GO" id="GO:0005085">
    <property type="term" value="F:guanyl-nucleotide exchange factor activity"/>
    <property type="evidence" value="ECO:0007669"/>
    <property type="project" value="UniProtKB-KW"/>
</dbReference>
<dbReference type="GO" id="GO:0007265">
    <property type="term" value="P:Ras protein signal transduction"/>
    <property type="evidence" value="ECO:0007669"/>
    <property type="project" value="TreeGrafter"/>
</dbReference>
<dbReference type="CDD" id="cd00155">
    <property type="entry name" value="RasGEF"/>
    <property type="match status" value="1"/>
</dbReference>
<dbReference type="FunFam" id="1.10.840.10:FF:000002">
    <property type="entry name" value="Rap guanine nucleotide exchange factor 4"/>
    <property type="match status" value="1"/>
</dbReference>
<dbReference type="FunFam" id="3.10.20.90:FF:000038">
    <property type="entry name" value="Rap guanine nucleotide exchange factor 4"/>
    <property type="match status" value="1"/>
</dbReference>
<dbReference type="Gene3D" id="3.10.20.90">
    <property type="entry name" value="Phosphatidylinositol 3-kinase Catalytic Subunit, Chain A, domain 1"/>
    <property type="match status" value="1"/>
</dbReference>
<dbReference type="Gene3D" id="1.10.840.10">
    <property type="entry name" value="Ras guanine-nucleotide exchange factors catalytic domain"/>
    <property type="match status" value="1"/>
</dbReference>
<dbReference type="Gene3D" id="1.20.870.10">
    <property type="entry name" value="Son of sevenless (SoS) protein Chain: S domain 1"/>
    <property type="match status" value="1"/>
</dbReference>
<dbReference type="InterPro" id="IPR008937">
    <property type="entry name" value="Ras-like_GEF"/>
</dbReference>
<dbReference type="InterPro" id="IPR023578">
    <property type="entry name" value="Ras_GEF_dom_sf"/>
</dbReference>
<dbReference type="InterPro" id="IPR001895">
    <property type="entry name" value="RASGEF_cat_dom"/>
</dbReference>
<dbReference type="InterPro" id="IPR036964">
    <property type="entry name" value="RASGEF_cat_dom_sf"/>
</dbReference>
<dbReference type="InterPro" id="IPR029071">
    <property type="entry name" value="Ubiquitin-like_domsf"/>
</dbReference>
<dbReference type="PANTHER" id="PTHR23113">
    <property type="entry name" value="GUANINE NUCLEOTIDE EXCHANGE FACTOR"/>
    <property type="match status" value="1"/>
</dbReference>
<dbReference type="PANTHER" id="PTHR23113:SF230">
    <property type="entry name" value="RAP GUANINE NUCLEOTIDE EXCHANGE FACTOR-LIKE 1"/>
    <property type="match status" value="1"/>
</dbReference>
<dbReference type="Pfam" id="PF00617">
    <property type="entry name" value="RasGEF"/>
    <property type="match status" value="1"/>
</dbReference>
<dbReference type="SMART" id="SM00147">
    <property type="entry name" value="RasGEF"/>
    <property type="match status" value="1"/>
</dbReference>
<dbReference type="SUPFAM" id="SSF48366">
    <property type="entry name" value="Ras GEF"/>
    <property type="match status" value="1"/>
</dbReference>
<dbReference type="SUPFAM" id="SSF54236">
    <property type="entry name" value="Ubiquitin-like"/>
    <property type="match status" value="1"/>
</dbReference>
<dbReference type="PROSITE" id="PS50009">
    <property type="entry name" value="RASGEF_CAT"/>
    <property type="match status" value="1"/>
</dbReference>
<protein>
    <recommendedName>
        <fullName>Rap guanine nucleotide exchange factor-like 1</fullName>
    </recommendedName>
</protein>
<organism>
    <name type="scientific">Pongo pygmaeus</name>
    <name type="common">Bornean orangutan</name>
    <dbReference type="NCBI Taxonomy" id="9600"/>
    <lineage>
        <taxon>Eukaryota</taxon>
        <taxon>Metazoa</taxon>
        <taxon>Chordata</taxon>
        <taxon>Craniata</taxon>
        <taxon>Vertebrata</taxon>
        <taxon>Euteleostomi</taxon>
        <taxon>Mammalia</taxon>
        <taxon>Eutheria</taxon>
        <taxon>Euarchontoglires</taxon>
        <taxon>Primates</taxon>
        <taxon>Haplorrhini</taxon>
        <taxon>Catarrhini</taxon>
        <taxon>Hominidae</taxon>
        <taxon>Pongo</taxon>
    </lineage>
</organism>
<evidence type="ECO:0000255" key="1">
    <source>
        <dbReference type="PROSITE-ProRule" id="PRU00168"/>
    </source>
</evidence>
<accession>Q5R9B2</accession>
<sequence length="456" mass="52426">MEGPEGLGRKQACLAMLLHFLDTYQGLLQEEEGAGHIIKDLYLLIMKDESLYQGLREDTLRLHQLVETVELKIPEENQPPSKQVKPLFRHFRRIDSCLQTRVAFRGSDEIFCRVYMPDHSYVTIRSRLSASVQDILGSVTEKLQYSEEPAGREDSLILVAVSSSGEKVLLQPTEDCVFTALGINSHLFACTRDSYEALVPLPEEIQVSPGDTEIHRVEPEDVANHLTAFHWELFRCVHELEFVDYVFHGERGRRETANLELLLQRCSEVTHWVATEVLLCEAPGKRAQLLKKFIKIAALCKQNQDLLSFYAVVMGLDNAAVSRLRLTWEKLPGKFKNLFRKFENLTDPCRNHKSYREVISKMKPPVIPFVPLILKDLTFLHEGSKTLVDGLVNIEKLHSVAEKVRTIRKYRSRPLYLDMEASPHHLQTKAYVRQFQVIDNQNLLFELSYKLEANSQ</sequence>
<comment type="function">
    <text>Probable guanine nucleotide exchange factor (GEF).</text>
</comment>
<name>RPGFL_PONPY</name>
<proteinExistence type="evidence at transcript level"/>
<gene>
    <name type="primary">RAPGEFL1</name>
</gene>
<reference key="1">
    <citation type="submission" date="2004-11" db="EMBL/GenBank/DDBJ databases">
        <authorList>
            <consortium name="The German cDNA consortium"/>
        </authorList>
    </citation>
    <scope>NUCLEOTIDE SEQUENCE [LARGE SCALE MRNA]</scope>
    <source>
        <tissue>Brain cortex</tissue>
    </source>
</reference>
<keyword id="KW-0344">Guanine-nucleotide releasing factor</keyword>